<sequence>MISTIALFWALCVVCVVNMARYFSSLRALLVVLRGCDPLLYQYVDGGGFFTSHGQPSKQMRLVWYIYAQRYRDHHDDEFIRRCERVRRQFILTSALCGLVVVSLIALMIWH</sequence>
<accession>B5XN50</accession>
<proteinExistence type="inferred from homology"/>
<dbReference type="EMBL" id="CP000964">
    <property type="protein sequence ID" value="ACI08448.1"/>
    <property type="molecule type" value="Genomic_DNA"/>
</dbReference>
<dbReference type="KEGG" id="kpe:KPK_0248"/>
<dbReference type="HOGENOM" id="CLU_151816_0_0_6"/>
<dbReference type="Proteomes" id="UP000001734">
    <property type="component" value="Chromosome"/>
</dbReference>
<dbReference type="GO" id="GO:0005886">
    <property type="term" value="C:plasma membrane"/>
    <property type="evidence" value="ECO:0007669"/>
    <property type="project" value="UniProtKB-SubCell"/>
</dbReference>
<dbReference type="HAMAP" id="MF_01088">
    <property type="entry name" value="UspB"/>
    <property type="match status" value="1"/>
</dbReference>
<dbReference type="InterPro" id="IPR019598">
    <property type="entry name" value="Universal_stress_protein_B"/>
</dbReference>
<dbReference type="NCBIfam" id="NF003435">
    <property type="entry name" value="PRK04960.1"/>
    <property type="match status" value="1"/>
</dbReference>
<dbReference type="Pfam" id="PF10625">
    <property type="entry name" value="UspB"/>
    <property type="match status" value="1"/>
</dbReference>
<feature type="chain" id="PRO_1000136919" description="Universal stress protein B">
    <location>
        <begin position="1"/>
        <end position="111"/>
    </location>
</feature>
<feature type="transmembrane region" description="Helical" evidence="1">
    <location>
        <begin position="1"/>
        <end position="21"/>
    </location>
</feature>
<feature type="transmembrane region" description="Helical" evidence="1">
    <location>
        <begin position="90"/>
        <end position="110"/>
    </location>
</feature>
<gene>
    <name evidence="1" type="primary">uspB</name>
    <name type="ordered locus">KPK_0248</name>
</gene>
<protein>
    <recommendedName>
        <fullName evidence="1">Universal stress protein B</fullName>
    </recommendedName>
</protein>
<organism>
    <name type="scientific">Klebsiella pneumoniae (strain 342)</name>
    <dbReference type="NCBI Taxonomy" id="507522"/>
    <lineage>
        <taxon>Bacteria</taxon>
        <taxon>Pseudomonadati</taxon>
        <taxon>Pseudomonadota</taxon>
        <taxon>Gammaproteobacteria</taxon>
        <taxon>Enterobacterales</taxon>
        <taxon>Enterobacteriaceae</taxon>
        <taxon>Klebsiella/Raoultella group</taxon>
        <taxon>Klebsiella</taxon>
        <taxon>Klebsiella pneumoniae complex</taxon>
    </lineage>
</organism>
<keyword id="KW-0997">Cell inner membrane</keyword>
<keyword id="KW-1003">Cell membrane</keyword>
<keyword id="KW-0472">Membrane</keyword>
<keyword id="KW-0812">Transmembrane</keyword>
<keyword id="KW-1133">Transmembrane helix</keyword>
<reference key="1">
    <citation type="journal article" date="2008" name="PLoS Genet.">
        <title>Complete genome sequence of the N2-fixing broad host range endophyte Klebsiella pneumoniae 342 and virulence predictions verified in mice.</title>
        <authorList>
            <person name="Fouts D.E."/>
            <person name="Tyler H.L."/>
            <person name="DeBoy R.T."/>
            <person name="Daugherty S."/>
            <person name="Ren Q."/>
            <person name="Badger J.H."/>
            <person name="Durkin A.S."/>
            <person name="Huot H."/>
            <person name="Shrivastava S."/>
            <person name="Kothari S."/>
            <person name="Dodson R.J."/>
            <person name="Mohamoud Y."/>
            <person name="Khouri H."/>
            <person name="Roesch L.F.W."/>
            <person name="Krogfelt K.A."/>
            <person name="Struve C."/>
            <person name="Triplett E.W."/>
            <person name="Methe B.A."/>
        </authorList>
    </citation>
    <scope>NUCLEOTIDE SEQUENCE [LARGE SCALE GENOMIC DNA]</scope>
    <source>
        <strain>342</strain>
    </source>
</reference>
<comment type="subcellular location">
    <subcellularLocation>
        <location evidence="1">Cell inner membrane</location>
        <topology evidence="1">Multi-pass membrane protein</topology>
    </subcellularLocation>
</comment>
<comment type="similarity">
    <text evidence="1">Belongs to the universal stress protein B family.</text>
</comment>
<evidence type="ECO:0000255" key="1">
    <source>
        <dbReference type="HAMAP-Rule" id="MF_01088"/>
    </source>
</evidence>
<name>USPB_KLEP3</name>